<name>SYFB_SHIBS</name>
<keyword id="KW-0030">Aminoacyl-tRNA synthetase</keyword>
<keyword id="KW-0067">ATP-binding</keyword>
<keyword id="KW-0963">Cytoplasm</keyword>
<keyword id="KW-0436">Ligase</keyword>
<keyword id="KW-0460">Magnesium</keyword>
<keyword id="KW-0479">Metal-binding</keyword>
<keyword id="KW-0547">Nucleotide-binding</keyword>
<keyword id="KW-0648">Protein biosynthesis</keyword>
<keyword id="KW-0694">RNA-binding</keyword>
<keyword id="KW-0820">tRNA-binding</keyword>
<evidence type="ECO:0000255" key="1">
    <source>
        <dbReference type="HAMAP-Rule" id="MF_00283"/>
    </source>
</evidence>
<accession>Q321K5</accession>
<gene>
    <name evidence="1" type="primary">pheT</name>
    <name type="ordered locus">SBO_1380</name>
</gene>
<reference key="1">
    <citation type="journal article" date="2005" name="Nucleic Acids Res.">
        <title>Genome dynamics and diversity of Shigella species, the etiologic agents of bacillary dysentery.</title>
        <authorList>
            <person name="Yang F."/>
            <person name="Yang J."/>
            <person name="Zhang X."/>
            <person name="Chen L."/>
            <person name="Jiang Y."/>
            <person name="Yan Y."/>
            <person name="Tang X."/>
            <person name="Wang J."/>
            <person name="Xiong Z."/>
            <person name="Dong J."/>
            <person name="Xue Y."/>
            <person name="Zhu Y."/>
            <person name="Xu X."/>
            <person name="Sun L."/>
            <person name="Chen S."/>
            <person name="Nie H."/>
            <person name="Peng J."/>
            <person name="Xu J."/>
            <person name="Wang Y."/>
            <person name="Yuan Z."/>
            <person name="Wen Y."/>
            <person name="Yao Z."/>
            <person name="Shen Y."/>
            <person name="Qiang B."/>
            <person name="Hou Y."/>
            <person name="Yu J."/>
            <person name="Jin Q."/>
        </authorList>
    </citation>
    <scope>NUCLEOTIDE SEQUENCE [LARGE SCALE GENOMIC DNA]</scope>
    <source>
        <strain>Sb227</strain>
    </source>
</reference>
<comment type="catalytic activity">
    <reaction evidence="1">
        <text>tRNA(Phe) + L-phenylalanine + ATP = L-phenylalanyl-tRNA(Phe) + AMP + diphosphate + H(+)</text>
        <dbReference type="Rhea" id="RHEA:19413"/>
        <dbReference type="Rhea" id="RHEA-COMP:9668"/>
        <dbReference type="Rhea" id="RHEA-COMP:9699"/>
        <dbReference type="ChEBI" id="CHEBI:15378"/>
        <dbReference type="ChEBI" id="CHEBI:30616"/>
        <dbReference type="ChEBI" id="CHEBI:33019"/>
        <dbReference type="ChEBI" id="CHEBI:58095"/>
        <dbReference type="ChEBI" id="CHEBI:78442"/>
        <dbReference type="ChEBI" id="CHEBI:78531"/>
        <dbReference type="ChEBI" id="CHEBI:456215"/>
        <dbReference type="EC" id="6.1.1.20"/>
    </reaction>
</comment>
<comment type="cofactor">
    <cofactor evidence="1">
        <name>Mg(2+)</name>
        <dbReference type="ChEBI" id="CHEBI:18420"/>
    </cofactor>
    <text evidence="1">Binds 2 magnesium ions per tetramer.</text>
</comment>
<comment type="subunit">
    <text evidence="1">Tetramer of two alpha and two beta subunits.</text>
</comment>
<comment type="subcellular location">
    <subcellularLocation>
        <location evidence="1">Cytoplasm</location>
    </subcellularLocation>
</comment>
<comment type="similarity">
    <text evidence="1">Belongs to the phenylalanyl-tRNA synthetase beta subunit family. Type 1 subfamily.</text>
</comment>
<organism>
    <name type="scientific">Shigella boydii serotype 4 (strain Sb227)</name>
    <dbReference type="NCBI Taxonomy" id="300268"/>
    <lineage>
        <taxon>Bacteria</taxon>
        <taxon>Pseudomonadati</taxon>
        <taxon>Pseudomonadota</taxon>
        <taxon>Gammaproteobacteria</taxon>
        <taxon>Enterobacterales</taxon>
        <taxon>Enterobacteriaceae</taxon>
        <taxon>Shigella</taxon>
    </lineage>
</organism>
<protein>
    <recommendedName>
        <fullName evidence="1">Phenylalanine--tRNA ligase beta subunit</fullName>
        <ecNumber evidence="1">6.1.1.20</ecNumber>
    </recommendedName>
    <alternativeName>
        <fullName evidence="1">Phenylalanyl-tRNA synthetase beta subunit</fullName>
        <shortName evidence="1">PheRS</shortName>
    </alternativeName>
</protein>
<sequence>MKFSELWLREWVNPAIDSDALANQITMAGLEVDGVEPVAGSFHGVVVGEVVECAQHPNADKLRVTKVNVGGDRLLDIVCGAPNCRQGLRVAVATIGAVLPGDFKIKAAKLRGEPSEGMLCSFSELGISDDHSGIIELPADAPIGTDIREYLKLDDNTIEISVTPNRADCLGIIGVARDVAVLNQLPLVEPEIVPVGATIDDTLPITVEAPEACPRYLGRVVKGINVKAPTPLWMKEKLRRCGIRSIDAVVDVTNYVLLELGQPMHAFDKDRIEGGIVVRMAKEGETLVLLDGTEAKLNADTLVIADHNKALAMGGIFGGEHSGVNDETQNVLLECAFFSPLSITGRARRHGLHTDASHRYERGVDPALQHKAMERATRLLIDICGGEAGPVIDITNEATLPKRATITLRRSKLDCLIGHHIADEQVTDILRRLGCEVTEGKDEWQAVAPSWRFDMEIEEDLVEEVARVYGYNNIPDEPVQASLIMGTHREADLSLKRVKTLLNDKGYQEVITYSFVDPKVQQMIHPGVEALLLPSPISVEMSAMRLSLWTGLLATVVYNQNRQQNRVRIFESGLRFVPDTQAPLGIRQDLMLAGVICGNRYEEHWNLAKETVDFYDLKGDLESVLDLTGKLNEVEFRAEANPALHPGQSAAIYLKGERIGFVGVVHPELERKLDLNGRTLVFELEWNKLADRVVPQAREISRFPANRRDIAVVVAENVPAADILSECKKVGVNQVVGVNLFDVYRGKGVAEGYKSLAISLILQDTSRTLEEEEIAATVAKCVEALKERFQASLRD</sequence>
<proteinExistence type="inferred from homology"/>
<feature type="chain" id="PRO_0000232086" description="Phenylalanine--tRNA ligase beta subunit">
    <location>
        <begin position="1"/>
        <end position="795"/>
    </location>
</feature>
<feature type="domain" description="tRNA-binding" evidence="1">
    <location>
        <begin position="39"/>
        <end position="148"/>
    </location>
</feature>
<feature type="domain" description="B5" evidence="1">
    <location>
        <begin position="401"/>
        <end position="476"/>
    </location>
</feature>
<feature type="domain" description="FDX-ACB" evidence="1">
    <location>
        <begin position="701"/>
        <end position="794"/>
    </location>
</feature>
<feature type="binding site" evidence="1">
    <location>
        <position position="454"/>
    </location>
    <ligand>
        <name>Mg(2+)</name>
        <dbReference type="ChEBI" id="CHEBI:18420"/>
        <note>shared with alpha subunit</note>
    </ligand>
</feature>
<feature type="binding site" evidence="1">
    <location>
        <position position="460"/>
    </location>
    <ligand>
        <name>Mg(2+)</name>
        <dbReference type="ChEBI" id="CHEBI:18420"/>
        <note>shared with alpha subunit</note>
    </ligand>
</feature>
<feature type="binding site" evidence="1">
    <location>
        <position position="463"/>
    </location>
    <ligand>
        <name>Mg(2+)</name>
        <dbReference type="ChEBI" id="CHEBI:18420"/>
        <note>shared with alpha subunit</note>
    </ligand>
</feature>
<feature type="binding site" evidence="1">
    <location>
        <position position="464"/>
    </location>
    <ligand>
        <name>Mg(2+)</name>
        <dbReference type="ChEBI" id="CHEBI:18420"/>
        <note>shared with alpha subunit</note>
    </ligand>
</feature>
<dbReference type="EC" id="6.1.1.20" evidence="1"/>
<dbReference type="EMBL" id="CP000036">
    <property type="protein sequence ID" value="ABB66003.1"/>
    <property type="molecule type" value="Genomic_DNA"/>
</dbReference>
<dbReference type="RefSeq" id="WP_000672352.1">
    <property type="nucleotide sequence ID" value="NC_007613.1"/>
</dbReference>
<dbReference type="SMR" id="Q321K5"/>
<dbReference type="KEGG" id="sbo:SBO_1380"/>
<dbReference type="HOGENOM" id="CLU_016891_0_0_6"/>
<dbReference type="Proteomes" id="UP000007067">
    <property type="component" value="Chromosome"/>
</dbReference>
<dbReference type="GO" id="GO:0009328">
    <property type="term" value="C:phenylalanine-tRNA ligase complex"/>
    <property type="evidence" value="ECO:0007669"/>
    <property type="project" value="TreeGrafter"/>
</dbReference>
<dbReference type="GO" id="GO:0005524">
    <property type="term" value="F:ATP binding"/>
    <property type="evidence" value="ECO:0007669"/>
    <property type="project" value="UniProtKB-UniRule"/>
</dbReference>
<dbReference type="GO" id="GO:0000287">
    <property type="term" value="F:magnesium ion binding"/>
    <property type="evidence" value="ECO:0007669"/>
    <property type="project" value="UniProtKB-UniRule"/>
</dbReference>
<dbReference type="GO" id="GO:0004826">
    <property type="term" value="F:phenylalanine-tRNA ligase activity"/>
    <property type="evidence" value="ECO:0007669"/>
    <property type="project" value="UniProtKB-UniRule"/>
</dbReference>
<dbReference type="GO" id="GO:0000049">
    <property type="term" value="F:tRNA binding"/>
    <property type="evidence" value="ECO:0007669"/>
    <property type="project" value="UniProtKB-KW"/>
</dbReference>
<dbReference type="GO" id="GO:0006432">
    <property type="term" value="P:phenylalanyl-tRNA aminoacylation"/>
    <property type="evidence" value="ECO:0007669"/>
    <property type="project" value="UniProtKB-UniRule"/>
</dbReference>
<dbReference type="CDD" id="cd00769">
    <property type="entry name" value="PheRS_beta_core"/>
    <property type="match status" value="1"/>
</dbReference>
<dbReference type="CDD" id="cd02796">
    <property type="entry name" value="tRNA_bind_bactPheRS"/>
    <property type="match status" value="1"/>
</dbReference>
<dbReference type="FunFam" id="2.40.50.140:FF:000045">
    <property type="entry name" value="Phenylalanine--tRNA ligase beta subunit"/>
    <property type="match status" value="1"/>
</dbReference>
<dbReference type="FunFam" id="3.30.56.10:FF:000002">
    <property type="entry name" value="Phenylalanine--tRNA ligase beta subunit"/>
    <property type="match status" value="1"/>
</dbReference>
<dbReference type="FunFam" id="3.30.70.380:FF:000001">
    <property type="entry name" value="Phenylalanine--tRNA ligase beta subunit"/>
    <property type="match status" value="1"/>
</dbReference>
<dbReference type="FunFam" id="3.30.930.10:FF:000022">
    <property type="entry name" value="Phenylalanine--tRNA ligase beta subunit"/>
    <property type="match status" value="1"/>
</dbReference>
<dbReference type="FunFam" id="3.50.40.10:FF:000001">
    <property type="entry name" value="Phenylalanine--tRNA ligase beta subunit"/>
    <property type="match status" value="1"/>
</dbReference>
<dbReference type="Gene3D" id="3.30.56.10">
    <property type="match status" value="2"/>
</dbReference>
<dbReference type="Gene3D" id="3.30.930.10">
    <property type="entry name" value="Bira Bifunctional Protein, Domain 2"/>
    <property type="match status" value="1"/>
</dbReference>
<dbReference type="Gene3D" id="3.30.70.380">
    <property type="entry name" value="Ferrodoxin-fold anticodon-binding domain"/>
    <property type="match status" value="1"/>
</dbReference>
<dbReference type="Gene3D" id="2.40.50.140">
    <property type="entry name" value="Nucleic acid-binding proteins"/>
    <property type="match status" value="1"/>
</dbReference>
<dbReference type="Gene3D" id="3.50.40.10">
    <property type="entry name" value="Phenylalanyl-trna Synthetase, Chain B, domain 3"/>
    <property type="match status" value="1"/>
</dbReference>
<dbReference type="HAMAP" id="MF_00283">
    <property type="entry name" value="Phe_tRNA_synth_beta1"/>
    <property type="match status" value="1"/>
</dbReference>
<dbReference type="InterPro" id="IPR045864">
    <property type="entry name" value="aa-tRNA-synth_II/BPL/LPL"/>
</dbReference>
<dbReference type="InterPro" id="IPR005146">
    <property type="entry name" value="B3/B4_tRNA-bd"/>
</dbReference>
<dbReference type="InterPro" id="IPR009061">
    <property type="entry name" value="DNA-bd_dom_put_sf"/>
</dbReference>
<dbReference type="InterPro" id="IPR005121">
    <property type="entry name" value="Fdx_antiC-bd"/>
</dbReference>
<dbReference type="InterPro" id="IPR036690">
    <property type="entry name" value="Fdx_antiC-bd_sf"/>
</dbReference>
<dbReference type="InterPro" id="IPR012340">
    <property type="entry name" value="NA-bd_OB-fold"/>
</dbReference>
<dbReference type="InterPro" id="IPR045060">
    <property type="entry name" value="Phe-tRNA-ligase_IIc_bsu"/>
</dbReference>
<dbReference type="InterPro" id="IPR004532">
    <property type="entry name" value="Phe-tRNA-ligase_IIc_bsu_bact"/>
</dbReference>
<dbReference type="InterPro" id="IPR020825">
    <property type="entry name" value="Phe-tRNA_synthase-like_B3/B4"/>
</dbReference>
<dbReference type="InterPro" id="IPR041616">
    <property type="entry name" value="PheRS_beta_core"/>
</dbReference>
<dbReference type="InterPro" id="IPR002547">
    <property type="entry name" value="tRNA-bd_dom"/>
</dbReference>
<dbReference type="InterPro" id="IPR033714">
    <property type="entry name" value="tRNA_bind_bactPheRS"/>
</dbReference>
<dbReference type="InterPro" id="IPR005147">
    <property type="entry name" value="tRNA_synthase_B5-dom"/>
</dbReference>
<dbReference type="NCBIfam" id="TIGR00472">
    <property type="entry name" value="pheT_bact"/>
    <property type="match status" value="1"/>
</dbReference>
<dbReference type="NCBIfam" id="NF045760">
    <property type="entry name" value="YtpR"/>
    <property type="match status" value="1"/>
</dbReference>
<dbReference type="PANTHER" id="PTHR10947:SF0">
    <property type="entry name" value="PHENYLALANINE--TRNA LIGASE BETA SUBUNIT"/>
    <property type="match status" value="1"/>
</dbReference>
<dbReference type="PANTHER" id="PTHR10947">
    <property type="entry name" value="PHENYLALANYL-TRNA SYNTHETASE BETA CHAIN AND LEUCINE-RICH REPEAT-CONTAINING PROTEIN 47"/>
    <property type="match status" value="1"/>
</dbReference>
<dbReference type="Pfam" id="PF03483">
    <property type="entry name" value="B3_4"/>
    <property type="match status" value="1"/>
</dbReference>
<dbReference type="Pfam" id="PF03484">
    <property type="entry name" value="B5"/>
    <property type="match status" value="1"/>
</dbReference>
<dbReference type="Pfam" id="PF03147">
    <property type="entry name" value="FDX-ACB"/>
    <property type="match status" value="1"/>
</dbReference>
<dbReference type="Pfam" id="PF01588">
    <property type="entry name" value="tRNA_bind"/>
    <property type="match status" value="1"/>
</dbReference>
<dbReference type="Pfam" id="PF17759">
    <property type="entry name" value="tRNA_synthFbeta"/>
    <property type="match status" value="1"/>
</dbReference>
<dbReference type="SMART" id="SM00873">
    <property type="entry name" value="B3_4"/>
    <property type="match status" value="1"/>
</dbReference>
<dbReference type="SMART" id="SM00874">
    <property type="entry name" value="B5"/>
    <property type="match status" value="1"/>
</dbReference>
<dbReference type="SMART" id="SM00896">
    <property type="entry name" value="FDX-ACB"/>
    <property type="match status" value="1"/>
</dbReference>
<dbReference type="SUPFAM" id="SSF54991">
    <property type="entry name" value="Anticodon-binding domain of PheRS"/>
    <property type="match status" value="1"/>
</dbReference>
<dbReference type="SUPFAM" id="SSF55681">
    <property type="entry name" value="Class II aaRS and biotin synthetases"/>
    <property type="match status" value="1"/>
</dbReference>
<dbReference type="SUPFAM" id="SSF50249">
    <property type="entry name" value="Nucleic acid-binding proteins"/>
    <property type="match status" value="1"/>
</dbReference>
<dbReference type="SUPFAM" id="SSF56037">
    <property type="entry name" value="PheT/TilS domain"/>
    <property type="match status" value="1"/>
</dbReference>
<dbReference type="SUPFAM" id="SSF46955">
    <property type="entry name" value="Putative DNA-binding domain"/>
    <property type="match status" value="1"/>
</dbReference>
<dbReference type="PROSITE" id="PS51483">
    <property type="entry name" value="B5"/>
    <property type="match status" value="1"/>
</dbReference>
<dbReference type="PROSITE" id="PS51447">
    <property type="entry name" value="FDX_ACB"/>
    <property type="match status" value="1"/>
</dbReference>
<dbReference type="PROSITE" id="PS50886">
    <property type="entry name" value="TRBD"/>
    <property type="match status" value="1"/>
</dbReference>